<feature type="chain" id="PRO_1000196732" description="S-adenosylmethionine synthase">
    <location>
        <begin position="1"/>
        <end position="396"/>
    </location>
</feature>
<feature type="region of interest" description="Flexible loop" evidence="1">
    <location>
        <begin position="100"/>
        <end position="110"/>
    </location>
</feature>
<feature type="binding site" description="in other chain" evidence="1">
    <location>
        <position position="16"/>
    </location>
    <ligand>
        <name>ATP</name>
        <dbReference type="ChEBI" id="CHEBI:30616"/>
        <note>ligand shared between two neighboring subunits</note>
    </ligand>
</feature>
<feature type="binding site" evidence="1">
    <location>
        <position position="18"/>
    </location>
    <ligand>
        <name>Mg(2+)</name>
        <dbReference type="ChEBI" id="CHEBI:18420"/>
    </ligand>
</feature>
<feature type="binding site" evidence="1">
    <location>
        <position position="44"/>
    </location>
    <ligand>
        <name>K(+)</name>
        <dbReference type="ChEBI" id="CHEBI:29103"/>
    </ligand>
</feature>
<feature type="binding site" description="in other chain" evidence="1">
    <location>
        <position position="57"/>
    </location>
    <ligand>
        <name>L-methionine</name>
        <dbReference type="ChEBI" id="CHEBI:57844"/>
        <note>ligand shared between two neighboring subunits</note>
    </ligand>
</feature>
<feature type="binding site" description="in other chain" evidence="1">
    <location>
        <position position="100"/>
    </location>
    <ligand>
        <name>L-methionine</name>
        <dbReference type="ChEBI" id="CHEBI:57844"/>
        <note>ligand shared between two neighboring subunits</note>
    </ligand>
</feature>
<feature type="binding site" description="in other chain" evidence="1">
    <location>
        <begin position="175"/>
        <end position="177"/>
    </location>
    <ligand>
        <name>ATP</name>
        <dbReference type="ChEBI" id="CHEBI:30616"/>
        <note>ligand shared between two neighboring subunits</note>
    </ligand>
</feature>
<feature type="binding site" description="in other chain" evidence="1">
    <location>
        <begin position="242"/>
        <end position="243"/>
    </location>
    <ligand>
        <name>ATP</name>
        <dbReference type="ChEBI" id="CHEBI:30616"/>
        <note>ligand shared between two neighboring subunits</note>
    </ligand>
</feature>
<feature type="binding site" evidence="1">
    <location>
        <position position="251"/>
    </location>
    <ligand>
        <name>ATP</name>
        <dbReference type="ChEBI" id="CHEBI:30616"/>
        <note>ligand shared between two neighboring subunits</note>
    </ligand>
</feature>
<feature type="binding site" evidence="1">
    <location>
        <position position="251"/>
    </location>
    <ligand>
        <name>L-methionine</name>
        <dbReference type="ChEBI" id="CHEBI:57844"/>
        <note>ligand shared between two neighboring subunits</note>
    </ligand>
</feature>
<feature type="binding site" description="in other chain" evidence="1">
    <location>
        <begin position="257"/>
        <end position="258"/>
    </location>
    <ligand>
        <name>ATP</name>
        <dbReference type="ChEBI" id="CHEBI:30616"/>
        <note>ligand shared between two neighboring subunits</note>
    </ligand>
</feature>
<feature type="binding site" evidence="1">
    <location>
        <position position="274"/>
    </location>
    <ligand>
        <name>ATP</name>
        <dbReference type="ChEBI" id="CHEBI:30616"/>
        <note>ligand shared between two neighboring subunits</note>
    </ligand>
</feature>
<feature type="binding site" evidence="1">
    <location>
        <position position="278"/>
    </location>
    <ligand>
        <name>ATP</name>
        <dbReference type="ChEBI" id="CHEBI:30616"/>
        <note>ligand shared between two neighboring subunits</note>
    </ligand>
</feature>
<feature type="binding site" description="in other chain" evidence="1">
    <location>
        <position position="282"/>
    </location>
    <ligand>
        <name>L-methionine</name>
        <dbReference type="ChEBI" id="CHEBI:57844"/>
        <note>ligand shared between two neighboring subunits</note>
    </ligand>
</feature>
<evidence type="ECO:0000255" key="1">
    <source>
        <dbReference type="HAMAP-Rule" id="MF_00086"/>
    </source>
</evidence>
<organism>
    <name type="scientific">Streptococcus pneumoniae (strain Taiwan19F-14)</name>
    <dbReference type="NCBI Taxonomy" id="487213"/>
    <lineage>
        <taxon>Bacteria</taxon>
        <taxon>Bacillati</taxon>
        <taxon>Bacillota</taxon>
        <taxon>Bacilli</taxon>
        <taxon>Lactobacillales</taxon>
        <taxon>Streptococcaceae</taxon>
        <taxon>Streptococcus</taxon>
    </lineage>
</organism>
<reference key="1">
    <citation type="journal article" date="2010" name="Genome Biol.">
        <title>Structure and dynamics of the pan-genome of Streptococcus pneumoniae and closely related species.</title>
        <authorList>
            <person name="Donati C."/>
            <person name="Hiller N.L."/>
            <person name="Tettelin H."/>
            <person name="Muzzi A."/>
            <person name="Croucher N.J."/>
            <person name="Angiuoli S.V."/>
            <person name="Oggioni M."/>
            <person name="Dunning Hotopp J.C."/>
            <person name="Hu F.Z."/>
            <person name="Riley D.R."/>
            <person name="Covacci A."/>
            <person name="Mitchell T.J."/>
            <person name="Bentley S.D."/>
            <person name="Kilian M."/>
            <person name="Ehrlich G.D."/>
            <person name="Rappuoli R."/>
            <person name="Moxon E.R."/>
            <person name="Masignani V."/>
        </authorList>
    </citation>
    <scope>NUCLEOTIDE SEQUENCE [LARGE SCALE GENOMIC DNA]</scope>
    <source>
        <strain>Taiwan19F-14</strain>
    </source>
</reference>
<proteinExistence type="inferred from homology"/>
<gene>
    <name evidence="1" type="primary">metK</name>
    <name type="ordered locus">SPT_0775</name>
</gene>
<comment type="function">
    <text evidence="1">Catalyzes the formation of S-adenosylmethionine (AdoMet) from methionine and ATP. The overall synthetic reaction is composed of two sequential steps, AdoMet formation and the subsequent tripolyphosphate hydrolysis which occurs prior to release of AdoMet from the enzyme.</text>
</comment>
<comment type="catalytic activity">
    <reaction evidence="1">
        <text>L-methionine + ATP + H2O = S-adenosyl-L-methionine + phosphate + diphosphate</text>
        <dbReference type="Rhea" id="RHEA:21080"/>
        <dbReference type="ChEBI" id="CHEBI:15377"/>
        <dbReference type="ChEBI" id="CHEBI:30616"/>
        <dbReference type="ChEBI" id="CHEBI:33019"/>
        <dbReference type="ChEBI" id="CHEBI:43474"/>
        <dbReference type="ChEBI" id="CHEBI:57844"/>
        <dbReference type="ChEBI" id="CHEBI:59789"/>
        <dbReference type="EC" id="2.5.1.6"/>
    </reaction>
</comment>
<comment type="cofactor">
    <cofactor evidence="1">
        <name>Mg(2+)</name>
        <dbReference type="ChEBI" id="CHEBI:18420"/>
    </cofactor>
    <text evidence="1">Binds 2 divalent ions per subunit.</text>
</comment>
<comment type="cofactor">
    <cofactor evidence="1">
        <name>K(+)</name>
        <dbReference type="ChEBI" id="CHEBI:29103"/>
    </cofactor>
    <text evidence="1">Binds 1 potassium ion per subunit.</text>
</comment>
<comment type="pathway">
    <text evidence="1">Amino-acid biosynthesis; S-adenosyl-L-methionine biosynthesis; S-adenosyl-L-methionine from L-methionine: step 1/1.</text>
</comment>
<comment type="subunit">
    <text evidence="1">Homotetramer; dimer of dimers.</text>
</comment>
<comment type="subcellular location">
    <subcellularLocation>
        <location evidence="1">Cytoplasm</location>
    </subcellularLocation>
</comment>
<comment type="similarity">
    <text evidence="1">Belongs to the AdoMet synthase family.</text>
</comment>
<protein>
    <recommendedName>
        <fullName evidence="1">S-adenosylmethionine synthase</fullName>
        <shortName evidence="1">AdoMet synthase</shortName>
        <ecNumber evidence="1">2.5.1.6</ecNumber>
    </recommendedName>
    <alternativeName>
        <fullName evidence="1">MAT</fullName>
    </alternativeName>
    <alternativeName>
        <fullName evidence="1">Methionine adenosyltransferase</fullName>
    </alternativeName>
</protein>
<dbReference type="EC" id="2.5.1.6" evidence="1"/>
<dbReference type="EMBL" id="CP000921">
    <property type="protein sequence ID" value="ACO23265.1"/>
    <property type="molecule type" value="Genomic_DNA"/>
</dbReference>
<dbReference type="RefSeq" id="WP_000003934.1">
    <property type="nucleotide sequence ID" value="NC_012469.1"/>
</dbReference>
<dbReference type="SMR" id="C1CQM2"/>
<dbReference type="KEGG" id="snt:SPT_0775"/>
<dbReference type="HOGENOM" id="CLU_041802_1_1_9"/>
<dbReference type="UniPathway" id="UPA00315">
    <property type="reaction ID" value="UER00080"/>
</dbReference>
<dbReference type="GO" id="GO:0005737">
    <property type="term" value="C:cytoplasm"/>
    <property type="evidence" value="ECO:0007669"/>
    <property type="project" value="UniProtKB-SubCell"/>
</dbReference>
<dbReference type="GO" id="GO:0005524">
    <property type="term" value="F:ATP binding"/>
    <property type="evidence" value="ECO:0007669"/>
    <property type="project" value="UniProtKB-UniRule"/>
</dbReference>
<dbReference type="GO" id="GO:0000287">
    <property type="term" value="F:magnesium ion binding"/>
    <property type="evidence" value="ECO:0007669"/>
    <property type="project" value="UniProtKB-UniRule"/>
</dbReference>
<dbReference type="GO" id="GO:0004478">
    <property type="term" value="F:methionine adenosyltransferase activity"/>
    <property type="evidence" value="ECO:0007669"/>
    <property type="project" value="UniProtKB-UniRule"/>
</dbReference>
<dbReference type="GO" id="GO:0006730">
    <property type="term" value="P:one-carbon metabolic process"/>
    <property type="evidence" value="ECO:0007669"/>
    <property type="project" value="UniProtKB-KW"/>
</dbReference>
<dbReference type="GO" id="GO:0006556">
    <property type="term" value="P:S-adenosylmethionine biosynthetic process"/>
    <property type="evidence" value="ECO:0007669"/>
    <property type="project" value="UniProtKB-UniRule"/>
</dbReference>
<dbReference type="CDD" id="cd18079">
    <property type="entry name" value="S-AdoMet_synt"/>
    <property type="match status" value="1"/>
</dbReference>
<dbReference type="FunFam" id="3.30.300.10:FF:000003">
    <property type="entry name" value="S-adenosylmethionine synthase"/>
    <property type="match status" value="1"/>
</dbReference>
<dbReference type="Gene3D" id="3.30.300.10">
    <property type="match status" value="3"/>
</dbReference>
<dbReference type="HAMAP" id="MF_00086">
    <property type="entry name" value="S_AdoMet_synth1"/>
    <property type="match status" value="1"/>
</dbReference>
<dbReference type="InterPro" id="IPR022631">
    <property type="entry name" value="ADOMET_SYNTHASE_CS"/>
</dbReference>
<dbReference type="InterPro" id="IPR022630">
    <property type="entry name" value="S-AdoMet_synt_C"/>
</dbReference>
<dbReference type="InterPro" id="IPR022629">
    <property type="entry name" value="S-AdoMet_synt_central"/>
</dbReference>
<dbReference type="InterPro" id="IPR022628">
    <property type="entry name" value="S-AdoMet_synt_N"/>
</dbReference>
<dbReference type="InterPro" id="IPR002133">
    <property type="entry name" value="S-AdoMet_synthetase"/>
</dbReference>
<dbReference type="InterPro" id="IPR022636">
    <property type="entry name" value="S-AdoMet_synthetase_sfam"/>
</dbReference>
<dbReference type="NCBIfam" id="TIGR01034">
    <property type="entry name" value="metK"/>
    <property type="match status" value="1"/>
</dbReference>
<dbReference type="PANTHER" id="PTHR11964">
    <property type="entry name" value="S-ADENOSYLMETHIONINE SYNTHETASE"/>
    <property type="match status" value="1"/>
</dbReference>
<dbReference type="Pfam" id="PF02773">
    <property type="entry name" value="S-AdoMet_synt_C"/>
    <property type="match status" value="1"/>
</dbReference>
<dbReference type="Pfam" id="PF02772">
    <property type="entry name" value="S-AdoMet_synt_M"/>
    <property type="match status" value="1"/>
</dbReference>
<dbReference type="Pfam" id="PF00438">
    <property type="entry name" value="S-AdoMet_synt_N"/>
    <property type="match status" value="1"/>
</dbReference>
<dbReference type="PIRSF" id="PIRSF000497">
    <property type="entry name" value="MAT"/>
    <property type="match status" value="1"/>
</dbReference>
<dbReference type="SUPFAM" id="SSF55973">
    <property type="entry name" value="S-adenosylmethionine synthetase"/>
    <property type="match status" value="3"/>
</dbReference>
<dbReference type="PROSITE" id="PS00376">
    <property type="entry name" value="ADOMET_SYNTHASE_1"/>
    <property type="match status" value="1"/>
</dbReference>
<dbReference type="PROSITE" id="PS00377">
    <property type="entry name" value="ADOMET_SYNTHASE_2"/>
    <property type="match status" value="1"/>
</dbReference>
<name>METK_STRZT</name>
<sequence length="396" mass="43173">MSERKLFTSESVSEGHPDKIADQISDAILDAILAKDPEAHVAAETAVYTGSVHVFGEISTNAYVDINRVVRDTIAEIGYTNTEYGFSAETVGVHPSLVEQSPDIAQGVNEALEVRGNADQDPLDLIGAGDQGLMFGFAVDETEELMPLPIALSHKLVRRLAELRKSGEISYLRPDAKSQVTVEYDENDRPVRVDTVVISTQHDPEATNEQIHQDVIDKVIKEVIPSSYLDDKTKFFINPTGRFVIGGPQGDSGLTGRKIIVDTYGGYSRHGGGAFSGKDATKVDRSASYAARYIAKNIVAADLAKKAEVQLAYAIGVAQPVSVRIDTFGTGTVAESQLEKAARQIFDLRPAGIIQMLDLKRPIYRQTSAYGHMGRTDIDLPWERLDKVDALKEAVK</sequence>
<keyword id="KW-0067">ATP-binding</keyword>
<keyword id="KW-0963">Cytoplasm</keyword>
<keyword id="KW-0460">Magnesium</keyword>
<keyword id="KW-0479">Metal-binding</keyword>
<keyword id="KW-0547">Nucleotide-binding</keyword>
<keyword id="KW-0554">One-carbon metabolism</keyword>
<keyword id="KW-0630">Potassium</keyword>
<keyword id="KW-0808">Transferase</keyword>
<accession>C1CQM2</accession>